<comment type="subunit">
    <text evidence="2">Heterodimer of 2 chains generated by proteolytic processing; the large extracellular N-terminal fragment and the membrane-bound C-terminal fragment predominantly remain associated and non-covalently linked.</text>
</comment>
<comment type="subcellular location">
    <subcellularLocation>
        <location evidence="1">Membrane</location>
        <topology evidence="1">Multi-pass membrane protein</topology>
    </subcellularLocation>
    <text evidence="1 9">Presence in the organic matrix of the skeleton may be due to shedding of a soluble peptide.</text>
</comment>
<comment type="tissue specificity">
    <text evidence="8">Component of the acid-insoluble and acid-soluble organic matrix of the aragonitic skeleton (at protein level).</text>
</comment>
<comment type="PTM">
    <text evidence="2">Autoproteolytically processed at the GPS region of the GAIN-B domain; this cleavage modulates receptor activity.</text>
</comment>
<comment type="similarity">
    <text evidence="10">Belongs to the polycystin family.</text>
</comment>
<name>PK1L_ACRMI</name>
<evidence type="ECO:0000255" key="1"/>
<evidence type="ECO:0000255" key="2">
    <source>
        <dbReference type="PROSITE-ProRule" id="PRU00098"/>
    </source>
</evidence>
<evidence type="ECO:0000255" key="3">
    <source>
        <dbReference type="PROSITE-ProRule" id="PRU00151"/>
    </source>
</evidence>
<evidence type="ECO:0000255" key="4">
    <source>
        <dbReference type="PROSITE-ProRule" id="PRU00152"/>
    </source>
</evidence>
<evidence type="ECO:0000255" key="5">
    <source>
        <dbReference type="PROSITE-ProRule" id="PRU00511"/>
    </source>
</evidence>
<evidence type="ECO:0000255" key="6">
    <source>
        <dbReference type="PROSITE-ProRule" id="PRU00558"/>
    </source>
</evidence>
<evidence type="ECO:0000256" key="7">
    <source>
        <dbReference type="SAM" id="MobiDB-lite"/>
    </source>
</evidence>
<evidence type="ECO:0000269" key="8">
    <source>
    </source>
</evidence>
<evidence type="ECO:0000303" key="9">
    <source>
    </source>
</evidence>
<evidence type="ECO:0000305" key="10"/>
<keyword id="KW-0903">Direct protein sequencing</keyword>
<keyword id="KW-1015">Disulfide bond</keyword>
<keyword id="KW-0472">Membrane</keyword>
<keyword id="KW-0677">Repeat</keyword>
<keyword id="KW-0732">Signal</keyword>
<keyword id="KW-0812">Transmembrane</keyword>
<keyword id="KW-1133">Transmembrane helix</keyword>
<feature type="signal peptide" evidence="1">
    <location>
        <begin position="1"/>
        <end position="21"/>
    </location>
</feature>
<feature type="chain" id="PRO_0000429553" description="Polycystin-1-related protein" evidence="1">
    <location>
        <begin position="22"/>
        <end position="3029" status="greater than"/>
    </location>
</feature>
<feature type="topological domain" description="Extracellular" evidence="1">
    <location>
        <begin position="22"/>
        <end position="1685"/>
    </location>
</feature>
<feature type="transmembrane region" description="Helical" evidence="1">
    <location>
        <begin position="1686"/>
        <end position="1706"/>
    </location>
</feature>
<feature type="topological domain" description="Cytoplasmic" evidence="1">
    <location>
        <begin position="1707"/>
        <end position="1895"/>
    </location>
</feature>
<feature type="transmembrane region" description="Helical" evidence="1">
    <location>
        <begin position="1896"/>
        <end position="1916"/>
    </location>
</feature>
<feature type="topological domain" description="Extracellular" evidence="1">
    <location>
        <begin position="1917"/>
        <end position="1933"/>
    </location>
</feature>
<feature type="transmembrane region" description="Helical" evidence="1">
    <location>
        <begin position="1934"/>
        <end position="1954"/>
    </location>
</feature>
<feature type="topological domain" description="Cytoplasmic" evidence="1">
    <location>
        <begin position="1955"/>
        <end position="2101"/>
    </location>
</feature>
<feature type="transmembrane region" description="Helical" evidence="1">
    <location>
        <begin position="2102"/>
        <end position="2122"/>
    </location>
</feature>
<feature type="topological domain" description="Extracellular" evidence="1">
    <location>
        <begin position="2123"/>
        <end position="2140"/>
    </location>
</feature>
<feature type="transmembrane region" description="Helical" evidence="1">
    <location>
        <begin position="2141"/>
        <end position="2161"/>
    </location>
</feature>
<feature type="topological domain" description="Cytoplasmic" evidence="1">
    <location>
        <begin position="2162"/>
        <end position="2250"/>
    </location>
</feature>
<feature type="transmembrane region" description="Helical" evidence="1">
    <location>
        <begin position="2251"/>
        <end position="2271"/>
    </location>
</feature>
<feature type="topological domain" description="Extracellular" evidence="1">
    <location>
        <begin position="2272"/>
        <end position="2462"/>
    </location>
</feature>
<feature type="transmembrane region" description="Helical" evidence="1">
    <location>
        <begin position="2463"/>
        <end position="2483"/>
    </location>
</feature>
<feature type="topological domain" description="Cytoplasmic" evidence="1">
    <location>
        <begin position="2484"/>
        <end position="2496"/>
    </location>
</feature>
<feature type="transmembrane region" description="Helical" evidence="1">
    <location>
        <begin position="2497"/>
        <end position="2517"/>
    </location>
</feature>
<feature type="topological domain" description="Extracellular" evidence="1">
    <location>
        <begin position="2518"/>
        <end position="2538"/>
    </location>
</feature>
<feature type="transmembrane region" description="Helical" evidence="1">
    <location>
        <begin position="2539"/>
        <end position="2559"/>
    </location>
</feature>
<feature type="topological domain" description="Cytoplasmic" evidence="1">
    <location>
        <begin position="2560"/>
        <end position="2586"/>
    </location>
</feature>
<feature type="transmembrane region" description="Helical" evidence="1">
    <location>
        <begin position="2587"/>
        <end position="2607"/>
    </location>
</feature>
<feature type="topological domain" description="Extracellular" evidence="1">
    <location>
        <begin position="2608"/>
        <end position="2651"/>
    </location>
</feature>
<feature type="transmembrane region" description="Helical" evidence="1">
    <location>
        <begin position="2652"/>
        <end position="2672"/>
    </location>
</feature>
<feature type="topological domain" description="Cytoplasmic" evidence="1">
    <location>
        <begin position="2673"/>
        <end position="3029"/>
    </location>
</feature>
<feature type="domain" description="WSC" evidence="6">
    <location>
        <begin position="29"/>
        <end position="121"/>
    </location>
</feature>
<feature type="domain" description="PKD 1" evidence="3">
    <location>
        <begin position="364"/>
        <end position="450"/>
    </location>
</feature>
<feature type="domain" description="PKD 2" evidence="3">
    <location>
        <begin position="546"/>
        <end position="634"/>
    </location>
</feature>
<feature type="domain" description="REJ" evidence="5">
    <location>
        <begin position="633"/>
        <end position="1476"/>
    </location>
</feature>
<feature type="domain" description="GAIN-B" evidence="2">
    <location>
        <begin position="1525"/>
        <end position="1671"/>
    </location>
</feature>
<feature type="domain" description="PLAT" evidence="4">
    <location>
        <begin position="1733"/>
        <end position="1851"/>
    </location>
</feature>
<feature type="region of interest" description="Disordered" evidence="7">
    <location>
        <begin position="754"/>
        <end position="773"/>
    </location>
</feature>
<feature type="region of interest" description="Disordered" evidence="7">
    <location>
        <begin position="909"/>
        <end position="931"/>
    </location>
</feature>
<feature type="region of interest" description="Disordered" evidence="7">
    <location>
        <begin position="989"/>
        <end position="1051"/>
    </location>
</feature>
<feature type="region of interest" description="GPS" evidence="2">
    <location>
        <begin position="1624"/>
        <end position="1671"/>
    </location>
</feature>
<feature type="region of interest" description="Disordered" evidence="7">
    <location>
        <begin position="2704"/>
        <end position="2726"/>
    </location>
</feature>
<feature type="compositionally biased region" description="Polar residues" evidence="7">
    <location>
        <begin position="918"/>
        <end position="931"/>
    </location>
</feature>
<feature type="compositionally biased region" description="Acidic residues" evidence="7">
    <location>
        <begin position="997"/>
        <end position="1013"/>
    </location>
</feature>
<feature type="compositionally biased region" description="Polar residues" evidence="7">
    <location>
        <begin position="1020"/>
        <end position="1047"/>
    </location>
</feature>
<feature type="compositionally biased region" description="Acidic residues" evidence="7">
    <location>
        <begin position="2716"/>
        <end position="2726"/>
    </location>
</feature>
<feature type="site" description="Cleavage; by autolysis" evidence="2">
    <location>
        <begin position="1656"/>
        <end position="1657"/>
    </location>
</feature>
<feature type="disulfide bond" evidence="2">
    <location>
        <begin position="1624"/>
        <end position="1651"/>
    </location>
</feature>
<feature type="disulfide bond" evidence="2">
    <location>
        <begin position="1639"/>
        <end position="1653"/>
    </location>
</feature>
<feature type="non-terminal residue" evidence="10">
    <location>
        <position position="3029"/>
    </location>
</feature>
<protein>
    <recommendedName>
        <fullName>Polycystin-1-related protein</fullName>
    </recommendedName>
    <alternativeName>
        <fullName evidence="9">Polycystic kidney disease 1-related protein</fullName>
    </alternativeName>
</protein>
<dbReference type="EMBL" id="JR978931">
    <property type="status" value="NOT_ANNOTATED_CDS"/>
    <property type="molecule type" value="mRNA"/>
</dbReference>
<dbReference type="EMBL" id="JR991141">
    <property type="status" value="NOT_ANNOTATED_CDS"/>
    <property type="molecule type" value="mRNA"/>
</dbReference>
<dbReference type="EMBL" id="JR991355">
    <property type="status" value="NOT_ANNOTATED_CDS"/>
    <property type="molecule type" value="mRNA"/>
</dbReference>
<dbReference type="OrthoDB" id="5975425at2759"/>
<dbReference type="GO" id="GO:0005929">
    <property type="term" value="C:cilium"/>
    <property type="evidence" value="ECO:0007669"/>
    <property type="project" value="UniProtKB-ARBA"/>
</dbReference>
<dbReference type="GO" id="GO:0005886">
    <property type="term" value="C:plasma membrane"/>
    <property type="evidence" value="ECO:0007669"/>
    <property type="project" value="TreeGrafter"/>
</dbReference>
<dbReference type="GO" id="GO:0005261">
    <property type="term" value="F:monoatomic cation channel activity"/>
    <property type="evidence" value="ECO:0007669"/>
    <property type="project" value="TreeGrafter"/>
</dbReference>
<dbReference type="GO" id="GO:0006816">
    <property type="term" value="P:calcium ion transport"/>
    <property type="evidence" value="ECO:0007669"/>
    <property type="project" value="TreeGrafter"/>
</dbReference>
<dbReference type="CDD" id="cd00146">
    <property type="entry name" value="PKD"/>
    <property type="match status" value="2"/>
</dbReference>
<dbReference type="Gene3D" id="2.60.220.50">
    <property type="match status" value="1"/>
</dbReference>
<dbReference type="Gene3D" id="2.60.40.10">
    <property type="entry name" value="Immunoglobulins"/>
    <property type="match status" value="2"/>
</dbReference>
<dbReference type="Gene3D" id="2.60.60.20">
    <property type="entry name" value="PLAT/LH2 domain"/>
    <property type="match status" value="1"/>
</dbReference>
<dbReference type="InterPro" id="IPR057244">
    <property type="entry name" value="GAIN_B"/>
</dbReference>
<dbReference type="InterPro" id="IPR046338">
    <property type="entry name" value="GAIN_dom_sf"/>
</dbReference>
<dbReference type="InterPro" id="IPR000203">
    <property type="entry name" value="GPS"/>
</dbReference>
<dbReference type="InterPro" id="IPR013783">
    <property type="entry name" value="Ig-like_fold"/>
</dbReference>
<dbReference type="InterPro" id="IPR000434">
    <property type="entry name" value="PC1"/>
</dbReference>
<dbReference type="InterPro" id="IPR022409">
    <property type="entry name" value="PKD/Chitinase_dom"/>
</dbReference>
<dbReference type="InterPro" id="IPR002859">
    <property type="entry name" value="PKD/REJ-like"/>
</dbReference>
<dbReference type="InterPro" id="IPR013122">
    <property type="entry name" value="PKD1_2_channel"/>
</dbReference>
<dbReference type="InterPro" id="IPR000601">
    <property type="entry name" value="PKD_dom"/>
</dbReference>
<dbReference type="InterPro" id="IPR035986">
    <property type="entry name" value="PKD_dom_sf"/>
</dbReference>
<dbReference type="InterPro" id="IPR001024">
    <property type="entry name" value="PLAT/LH2_dom"/>
</dbReference>
<dbReference type="InterPro" id="IPR036392">
    <property type="entry name" value="PLAT/LH2_dom_sf"/>
</dbReference>
<dbReference type="InterPro" id="IPR014010">
    <property type="entry name" value="REJ_dom"/>
</dbReference>
<dbReference type="InterPro" id="IPR002889">
    <property type="entry name" value="WSC_carb-bd"/>
</dbReference>
<dbReference type="PANTHER" id="PTHR46730:SF4">
    <property type="entry name" value="POLYCYSTIC KIDNEY DISEASE PROTEIN 1-LIKE 1"/>
    <property type="match status" value="1"/>
</dbReference>
<dbReference type="PANTHER" id="PTHR46730">
    <property type="entry name" value="POLYCYSTIN-1"/>
    <property type="match status" value="1"/>
</dbReference>
<dbReference type="Pfam" id="PF01825">
    <property type="entry name" value="GPS"/>
    <property type="match status" value="1"/>
</dbReference>
<dbReference type="Pfam" id="PF00801">
    <property type="entry name" value="PKD"/>
    <property type="match status" value="2"/>
</dbReference>
<dbReference type="Pfam" id="PF08016">
    <property type="entry name" value="PKD_channel"/>
    <property type="match status" value="1"/>
</dbReference>
<dbReference type="Pfam" id="PF01477">
    <property type="entry name" value="PLAT"/>
    <property type="match status" value="1"/>
</dbReference>
<dbReference type="Pfam" id="PF02010">
    <property type="entry name" value="REJ"/>
    <property type="match status" value="2"/>
</dbReference>
<dbReference type="Pfam" id="PF01822">
    <property type="entry name" value="WSC"/>
    <property type="match status" value="1"/>
</dbReference>
<dbReference type="PRINTS" id="PR00500">
    <property type="entry name" value="POLYCYSTIN1"/>
</dbReference>
<dbReference type="SMART" id="SM00303">
    <property type="entry name" value="GPS"/>
    <property type="match status" value="1"/>
</dbReference>
<dbReference type="SMART" id="SM00308">
    <property type="entry name" value="LH2"/>
    <property type="match status" value="1"/>
</dbReference>
<dbReference type="SMART" id="SM00089">
    <property type="entry name" value="PKD"/>
    <property type="match status" value="2"/>
</dbReference>
<dbReference type="SMART" id="SM00321">
    <property type="entry name" value="WSC"/>
    <property type="match status" value="1"/>
</dbReference>
<dbReference type="SUPFAM" id="SSF49723">
    <property type="entry name" value="Lipase/lipooxygenase domain (PLAT/LH2 domain)"/>
    <property type="match status" value="1"/>
</dbReference>
<dbReference type="SUPFAM" id="SSF49299">
    <property type="entry name" value="PKD domain"/>
    <property type="match status" value="2"/>
</dbReference>
<dbReference type="PROSITE" id="PS50221">
    <property type="entry name" value="GAIN_B"/>
    <property type="match status" value="1"/>
</dbReference>
<dbReference type="PROSITE" id="PS50093">
    <property type="entry name" value="PKD"/>
    <property type="match status" value="2"/>
</dbReference>
<dbReference type="PROSITE" id="PS50095">
    <property type="entry name" value="PLAT"/>
    <property type="match status" value="1"/>
</dbReference>
<dbReference type="PROSITE" id="PS51111">
    <property type="entry name" value="REJ"/>
    <property type="match status" value="1"/>
</dbReference>
<dbReference type="PROSITE" id="PS51212">
    <property type="entry name" value="WSC"/>
    <property type="match status" value="1"/>
</dbReference>
<reference evidence="10" key="1">
    <citation type="journal article" date="2012" name="Mol. Ecol.">
        <title>Whole transcriptome analysis of the coral Acropora millepora reveals complex responses to CO(2)-driven acidification during the initiation of calcification.</title>
        <authorList>
            <person name="Moya A."/>
            <person name="Huisman L."/>
            <person name="Ball E.E."/>
            <person name="Hayward D.C."/>
            <person name="Grasso L.C."/>
            <person name="Chua C.M."/>
            <person name="Woo H.N."/>
            <person name="Gattuso J.P."/>
            <person name="Foret S."/>
            <person name="Miller D.J."/>
        </authorList>
    </citation>
    <scope>NUCLEOTIDE SEQUENCE [MRNA]</scope>
</reference>
<reference evidence="10" key="2">
    <citation type="journal article" date="2013" name="Mol. Biol. Evol.">
        <title>The skeletal proteome of the coral Acropora millepora: the evolution of calcification by co-option and domain shuffling.</title>
        <authorList>
            <person name="Ramos-Silva P."/>
            <person name="Kaandorp J."/>
            <person name="Huisman L."/>
            <person name="Marie B."/>
            <person name="Zanella-Cleon I."/>
            <person name="Guichard N."/>
            <person name="Miller D.J."/>
            <person name="Marin F."/>
        </authorList>
    </citation>
    <scope>PROTEIN SEQUENCE OF 834-846; 960-977; 1088-1101 AND 1322-1334</scope>
    <scope>TISSUE SPECIFICITY</scope>
    <scope>IDENTIFICATION BY MASS SPECTROMETRY</scope>
</reference>
<proteinExistence type="evidence at protein level"/>
<organism>
    <name type="scientific">Acropora millepora</name>
    <name type="common">Staghorn coral</name>
    <name type="synonym">Heteropora millepora</name>
    <dbReference type="NCBI Taxonomy" id="45264"/>
    <lineage>
        <taxon>Eukaryota</taxon>
        <taxon>Metazoa</taxon>
        <taxon>Cnidaria</taxon>
        <taxon>Anthozoa</taxon>
        <taxon>Hexacorallia</taxon>
        <taxon>Scleractinia</taxon>
        <taxon>Astrocoeniina</taxon>
        <taxon>Acroporidae</taxon>
        <taxon>Acropora</taxon>
    </lineage>
</organism>
<sequence length="3029" mass="339369">MAKHLYLAFSLILVPFLVSKAKQTSNGEVPWLVGCYRYDFDSSIEVSYHLDHAEPFSCVRLCASNESFRYAAVKNGRSCLCLARVEEKNRLNSSFCDVSCSEEMVNFTCGGKNVASVYSTAVPVIVSLKIRIPSKVKANASVLAVSEVLFRRRKEVSYLNTIALGNETADGVSVTWFLERELYNMTGYLQNKTLKVHSRIWNTLDGNYTNTSSVFLFVIPGVNHVCVLARNLFSQQKKCVPVDVVVPVTGLQLEAIFFKGTMLSVSSSSLSVPLSKYVEIKYAISSGSKPQFLVSLGNRTFHKAYNISGAAALSSSCLAVFPVFKSCGKKTIVVKAGNDFSLKSLRHLLVVHPFTEVLEFEKTEGHCIFTRVNTSVTLKATVGKDAPFGCPMSFEWNFNDSSSIIITDGTSVSHVFSSIQTYLVTVTLNNKFQRKQAAQQVCVQDNIKGVTLLPNVSYLIVSTNHEENLFSVQLSPSADCCGEVSYQFYKNETAFPLTAGRNSPVFHDSKPGRYVVFVQASNGISYATSNKILVDVMEPISSLFIDHLFLNHSHLSPGGKQVHFVAHLATGTNITYSWKFIGGSWENSINTTSNKVNYTFSKNGRYEVVLTASNAISKETASVDIVISDIPECYTRGVAIVGGMREVIRSQEIHLEAKLNLTCNVVNELRYLWKVTRRSDDDYDDDNHLSFFTYQVLIPPCTLEYGMYSIQLEVTMIDAKGIYLSSKNKKEIMITKSPLVAVISGGTERTVSKRKGPITLSASSSHDPDHPDEHKNLRFKWTCRPHGSSISCFNESTLPEIDFSKDALTFNVDWLMADFSHEFEVEVSKQDDPRSSTAFQILYVREKDELFEHVLSLNCIQCEKGHINPSQSLVIRGSCLSCSLDNPQITYRWKLYEVDSFVEGNTWECPSDDHSDRVTPSTTPMTDSNSPSVLQITDSYLEFTIGPCLGNKFEKSAGNKSGLASGSGDGTGNEIKYSSVKAPLKGNETSAIKADDSGDVDDDEVNNDNDDDSSSYSRSTLPTPLSMTNANSVNKPIITTDTPSFNKPNKPINPSMLWSRRRELRHLGEQTTTGIENQNLVLLGKFLKGGQTYLATFDVRDLETKQKGLASIIFQTSVSLKCGVCQITPAVGFSLQTTFQLVCSNWRSRQLLQYHVRYTIEGDRKEFIYSGLRDVTLFVLPAGNPFSNRTVEVHVEVSDGYSPSRTFRPIKVQVKPQTVAKGSSEEEVLLNETDGNNLSLLQMAGDEQRVLQFIMALSISLNRLSQVKNVSSNFHLRVAIREKLLNRFQNLSVYDKYSALQTCLALQSLTSKPDEIGANNVKVASQVLYNVIKNVTSKHKRKKKSLIEARQLLSQELIDCATTVTSNLIEAASLAVQRQDTTEKMLVMVTEATEQLIMAKLSTQVYGEHSLKVSTRNIIAEATQKRSVSNFSSSLSEFQFFMPSHLEEQLNITERCFGTMITCFQENPYFSDMNHTKVGSLSINHCSGEEIQVKNLGSDITILIPMGHGGAEKHPLNFMLKWNHRNVHVINQTAKMENQSLQLHLRPRSVLPSAFNVKFVVRTGKETLLFRSSGEAVNLFVDQEQLRSGSLNASVELEDTAYYRLKSVKGVSFNYSLGMQWIGCFYWNKRGKHWASDGCRLEKSINHTLVCRCNHLTAFSGGFIQPPNSLHLEDLRDTDKLKNSPLTMVLVISILVMYFLLLGFCVKADRHDKKKLGVIFLDDSTTFDANSQSRFQLSVQTGHWFGAGTSADVYLILHDNDVVSHPVELKYVGKPLFQRSSCDVFLLSFPKNLIRNISKIHVWHDNKGDYPSWFLERITIKNVQTGERWVFECNRWLAVDEGNGKVECELFAKKSWSTGLKESFLQHSAKAFLDYHLWLSLLGRPSYSRFTRAQRLSCCLSLLLSFLCVNIAWYRPKIEVTEVLGVLDVSANSIMIGVLGSLMVLPVNFLWIFFFRYSRRSLSRRVKACYPKSEHHTEITELVSSSVIDQSLETVQILSNFGAMRRMLQTRGTQVSGGNVPMSNPNGSGVCYLSAHDDLISDLPLPKGSAGLVETCDFLAALAPTRKKHDVAFDQQSTYSVYAPTTEGRGFYRSKFSLPHGFVYVAWFGCLITGTVTSAITIWYGLSFGWDLSVHWFQSLVFSLLESLLLSQPIMVLAFIFYMSHKTKSGKEDEDNDEGFEDLSTSDVNNIHYGYLNPGFDGQTTKKTPIDKALADRRRQRHLKYLKPPPLSQLAETREKSLKNRVLRNYVVELFVFIMFFVVTCALVFSVADPDVYHLNQSIRTSFLRSHYFTRPENVVDAWKRMSAVLVENASAPSPLMMLLPGTQSLLFGRTKVKKYYSPNVKVCHEAPAIQNSNTSTPLCYAGCHASKGLWITIDLNLTRAAAARQLTQFADTQWNNSCTREVSLDFAIYTPFLRAISAVTLSVKSSFVGTAKCDMELISAPVVFSSNGYSYFIRFTKLLFVVFFLYLLQHEFFLALKMTFSYFTNFWRVYQLLTIAISSACIVSYIHWSLSLYALLREVETERQSRVFYLSRQISWSQGFLQASYSLLLFLLLIRCLHLLRPFRFVRHFGRILSTSISSLLACWVFGFILVVAFAHPGYLLFGSVHSSFKSFGDAFLLVTSFFRLEGVARYQDFALEEQTLLLSTYFALFLIGFCVIVRGSTAAVVLHGIRCLGKRRRGLLSTVFEEFIRIKLQLSKEKKPKKPRPNSVSDLEETDDEDDLEQEAFLEEGPFFPTDHVLDELDAQIEEMSWRVESLFDDDPCADSISCTNSLLSTWLEDCDQGDVEYLYEAGNDPSVYSAGSGYESDHSAMSNSRCYFSSSSSLDIPDERIRHERVIGAKVGSHGCRGDHSLLTVAPNKTTAKQSYFCSSGRDESGSSINFSGDGYESPACSVPQGNMCDLPGACENPNILRNIVLRDSDLREGVLRDRTVWWDGETKKDMSLGAHTLHREKEPIKPKVMYGMVRGCSQKGEKAFPELANIAPHMEATTAGESSEEATCSSSDYEIGKEEASVIPVGQRVVSAM</sequence>
<accession>B8UU59</accession>